<name>EFGM_CAEEL</name>
<feature type="transit peptide" description="Mitochondrion" evidence="2">
    <location>
        <begin position="1"/>
        <end position="24"/>
    </location>
</feature>
<feature type="chain" id="PRO_0000007444" description="Elongation factor G, mitochondrial">
    <location>
        <begin position="25"/>
        <end position="750"/>
    </location>
</feature>
<feature type="domain" description="tr-type G">
    <location>
        <begin position="42"/>
        <end position="319"/>
    </location>
</feature>
<feature type="binding site" evidence="2">
    <location>
        <begin position="51"/>
        <end position="58"/>
    </location>
    <ligand>
        <name>GTP</name>
        <dbReference type="ChEBI" id="CHEBI:37565"/>
    </ligand>
</feature>
<feature type="binding site" evidence="2">
    <location>
        <begin position="118"/>
        <end position="122"/>
    </location>
    <ligand>
        <name>GTP</name>
        <dbReference type="ChEBI" id="CHEBI:37565"/>
    </ligand>
</feature>
<feature type="binding site" evidence="2">
    <location>
        <begin position="172"/>
        <end position="175"/>
    </location>
    <ligand>
        <name>GTP</name>
        <dbReference type="ChEBI" id="CHEBI:37565"/>
    </ligand>
</feature>
<evidence type="ECO:0000250" key="1">
    <source>
        <dbReference type="UniProtKB" id="Q96RP9"/>
    </source>
</evidence>
<evidence type="ECO:0000255" key="2">
    <source>
        <dbReference type="HAMAP-Rule" id="MF_03061"/>
    </source>
</evidence>
<evidence type="ECO:0000305" key="3"/>
<reference key="1">
    <citation type="journal article" date="1998" name="Science">
        <title>Genome sequence of the nematode C. elegans: a platform for investigating biology.</title>
        <authorList>
            <consortium name="The C. elegans sequencing consortium"/>
        </authorList>
    </citation>
    <scope>NUCLEOTIDE SEQUENCE [LARGE SCALE GENOMIC DNA]</scope>
    <source>
        <strain>Bristol N2</strain>
    </source>
</reference>
<gene>
    <name type="primary">gfm-1</name>
    <name type="ORF">F29C12.4</name>
</gene>
<proteinExistence type="inferred from homology"/>
<accession>Q9XV52</accession>
<organism>
    <name type="scientific">Caenorhabditis elegans</name>
    <dbReference type="NCBI Taxonomy" id="6239"/>
    <lineage>
        <taxon>Eukaryota</taxon>
        <taxon>Metazoa</taxon>
        <taxon>Ecdysozoa</taxon>
        <taxon>Nematoda</taxon>
        <taxon>Chromadorea</taxon>
        <taxon>Rhabditida</taxon>
        <taxon>Rhabditina</taxon>
        <taxon>Rhabditomorpha</taxon>
        <taxon>Rhabditoidea</taxon>
        <taxon>Rhabditidae</taxon>
        <taxon>Peloderinae</taxon>
        <taxon>Caenorhabditis</taxon>
    </lineage>
</organism>
<comment type="function">
    <text evidence="2">Mitochondrial GTPase that catalyzes the GTP-dependent ribosomal translocation step during translation elongation. During this step, the ribosome changes from the pre-translocational (PRE) to the post-translocational (POST) state as the newly formed A-site-bound peptidyl-tRNA and P-site-bound deacylated tRNA move to the P and E sites, respectively. Catalyzes the coordinated movement of the two tRNA molecules, the mRNA and conformational changes in the ribosome.</text>
</comment>
<comment type="catalytic activity">
    <reaction evidence="1">
        <text>GTP + H2O = GDP + phosphate + H(+)</text>
        <dbReference type="Rhea" id="RHEA:19669"/>
        <dbReference type="ChEBI" id="CHEBI:15377"/>
        <dbReference type="ChEBI" id="CHEBI:15378"/>
        <dbReference type="ChEBI" id="CHEBI:37565"/>
        <dbReference type="ChEBI" id="CHEBI:43474"/>
        <dbReference type="ChEBI" id="CHEBI:58189"/>
    </reaction>
    <physiologicalReaction direction="left-to-right" evidence="1">
        <dbReference type="Rhea" id="RHEA:19670"/>
    </physiologicalReaction>
</comment>
<comment type="pathway">
    <text evidence="2">Protein biosynthesis; polypeptide chain elongation.</text>
</comment>
<comment type="subcellular location">
    <subcellularLocation>
        <location evidence="2">Mitochondrion</location>
    </subcellularLocation>
</comment>
<comment type="similarity">
    <text evidence="3">Belongs to the TRAFAC class translation factor GTPase superfamily. Classic translation factor GTPase family. EF-G/EF-2 subfamily.</text>
</comment>
<protein>
    <recommendedName>
        <fullName evidence="2">Elongation factor G, mitochondrial</fullName>
        <shortName evidence="2">EF-Gmt</shortName>
        <ecNumber evidence="1">3.6.5.-</ecNumber>
    </recommendedName>
    <alternativeName>
        <fullName evidence="2">Elongation factor G 1, mitochondrial</fullName>
        <shortName evidence="2">mEF-G 1</shortName>
    </alternativeName>
    <alternativeName>
        <fullName evidence="2">Elongation factor G1</fullName>
    </alternativeName>
</protein>
<sequence length="750" mass="83654">MSPLGRFSAVAQSRRQLNNVLRRFASNEAPSSVVVPGVRPIERIRNIGISAHIDSGKTTVTERILYYAGRIDSMHEVRGKDDVGATMDFMDLERQRGITIQSAATYVDWHGTNINIIDTPGHVDFTVEVERALRVLDGAVLVLCGVGGVQSQTFTVNRQLARYNVPFICFVNKMDRNGATPLKALDGLRNKLNHNAALIHLPIGKDSNFNGIVDLVEGHALYYEGEGGLIVRKDEIPKDLRVEAEDRRQELIEHIANVDETLGEMFLNDQTPNVQQIHEAIRRTVVKRAFVPVLSGSALKNKGVQTMINSVVKYLPDPSEVVNRATVKTETTGDEKGIILSPKRNNDKPFVGLAFKLEAGKYGQLTYFRVYQGQLSKGDTVYASRDGRKVRVQRLVRMHAADMEEITTAYAGDICATFGLDCHSGETFSTDQNLAPHCESMHIPEPVISMAIKPVNRKDADNFIKALTRFTKEDPTFRREYNQEAKETIVSGMGELHLEIYAQRMKSEYNCPVELGKPTVAYRECLGSPYKFHFRHKKQTGGQGQFGEIEGVIDPLPSDRNTVVEFSDETFGNNIPKNLFPALKKGLDAIVAEGPLIKSRIAGIHVRIQDGSTHAVDSTEIAMINTMQNMMRESFEKANWLLLEPIMKVEATVPTEFQGNVVTSLTQRNALITTTDSTEGYATVICEAPLSDMFGYTSELRSLTEGKGEFSMEYSRYAPTTLEAQDRVQAEWRQLHGIADPNEKGKKKKK</sequence>
<dbReference type="EC" id="3.6.5.-" evidence="1"/>
<dbReference type="EMBL" id="Z81519">
    <property type="protein sequence ID" value="CAB04216.1"/>
    <property type="molecule type" value="Genomic_DNA"/>
</dbReference>
<dbReference type="PIR" id="T21534">
    <property type="entry name" value="T21534"/>
</dbReference>
<dbReference type="RefSeq" id="NP_496787.1">
    <property type="nucleotide sequence ID" value="NM_064386.7"/>
</dbReference>
<dbReference type="SMR" id="Q9XV52"/>
<dbReference type="BioGRID" id="40252">
    <property type="interactions" value="7"/>
</dbReference>
<dbReference type="DIP" id="DIP-26845N"/>
<dbReference type="FunCoup" id="Q9XV52">
    <property type="interactions" value="2799"/>
</dbReference>
<dbReference type="STRING" id="6239.F29C12.4.2"/>
<dbReference type="PaxDb" id="6239-F29C12.4"/>
<dbReference type="PeptideAtlas" id="Q9XV52"/>
<dbReference type="EnsemblMetazoa" id="F29C12.4.1">
    <property type="protein sequence ID" value="F29C12.4.1"/>
    <property type="gene ID" value="WBGene00009246"/>
</dbReference>
<dbReference type="GeneID" id="174956"/>
<dbReference type="KEGG" id="cel:CELE_F29C12.4"/>
<dbReference type="UCSC" id="F29C12.4">
    <property type="organism name" value="c. elegans"/>
</dbReference>
<dbReference type="AGR" id="WB:WBGene00009246"/>
<dbReference type="CTD" id="174956"/>
<dbReference type="WormBase" id="F29C12.4">
    <property type="protein sequence ID" value="CE19822"/>
    <property type="gene ID" value="WBGene00009246"/>
    <property type="gene designation" value="gfm-1"/>
</dbReference>
<dbReference type="eggNOG" id="KOG0465">
    <property type="taxonomic scope" value="Eukaryota"/>
</dbReference>
<dbReference type="GeneTree" id="ENSGT00550000074911"/>
<dbReference type="HOGENOM" id="CLU_002794_4_0_1"/>
<dbReference type="InParanoid" id="Q9XV52"/>
<dbReference type="OMA" id="GQFAKVQ"/>
<dbReference type="OrthoDB" id="198619at2759"/>
<dbReference type="PhylomeDB" id="Q9XV52"/>
<dbReference type="Reactome" id="R-CEL-5389840">
    <property type="pathway name" value="Mitochondrial translation elongation"/>
</dbReference>
<dbReference type="UniPathway" id="UPA00345"/>
<dbReference type="PRO" id="PR:Q9XV52"/>
<dbReference type="Proteomes" id="UP000001940">
    <property type="component" value="Chromosome II"/>
</dbReference>
<dbReference type="Bgee" id="WBGene00009246">
    <property type="expression patterns" value="Expressed in germ line (C elegans) and 4 other cell types or tissues"/>
</dbReference>
<dbReference type="GO" id="GO:0005739">
    <property type="term" value="C:mitochondrion"/>
    <property type="evidence" value="ECO:0000318"/>
    <property type="project" value="GO_Central"/>
</dbReference>
<dbReference type="GO" id="GO:0005525">
    <property type="term" value="F:GTP binding"/>
    <property type="evidence" value="ECO:0007669"/>
    <property type="project" value="UniProtKB-UniRule"/>
</dbReference>
<dbReference type="GO" id="GO:0003924">
    <property type="term" value="F:GTPase activity"/>
    <property type="evidence" value="ECO:0000250"/>
    <property type="project" value="UniProtKB"/>
</dbReference>
<dbReference type="GO" id="GO:0003746">
    <property type="term" value="F:translation elongation factor activity"/>
    <property type="evidence" value="ECO:0000250"/>
    <property type="project" value="UniProtKB"/>
</dbReference>
<dbReference type="GO" id="GO:0070125">
    <property type="term" value="P:mitochondrial translational elongation"/>
    <property type="evidence" value="ECO:0000250"/>
    <property type="project" value="UniProtKB"/>
</dbReference>
<dbReference type="CDD" id="cd01886">
    <property type="entry name" value="EF-G"/>
    <property type="match status" value="1"/>
</dbReference>
<dbReference type="CDD" id="cd16262">
    <property type="entry name" value="EFG_III"/>
    <property type="match status" value="1"/>
</dbReference>
<dbReference type="CDD" id="cd01434">
    <property type="entry name" value="EFG_mtEFG1_IV"/>
    <property type="match status" value="1"/>
</dbReference>
<dbReference type="CDD" id="cd04097">
    <property type="entry name" value="mtEFG1_C"/>
    <property type="match status" value="1"/>
</dbReference>
<dbReference type="CDD" id="cd04091">
    <property type="entry name" value="mtEFG1_II_like"/>
    <property type="match status" value="1"/>
</dbReference>
<dbReference type="FunFam" id="3.30.70.240:FF:000001">
    <property type="entry name" value="Elongation factor G"/>
    <property type="match status" value="1"/>
</dbReference>
<dbReference type="FunFam" id="3.30.70.870:FF:000001">
    <property type="entry name" value="Elongation factor G"/>
    <property type="match status" value="1"/>
</dbReference>
<dbReference type="FunFam" id="2.40.30.10:FF:000022">
    <property type="entry name" value="Elongation factor G, mitochondrial"/>
    <property type="match status" value="1"/>
</dbReference>
<dbReference type="FunFam" id="3.40.50.300:FF:002874">
    <property type="entry name" value="Elongation factor G, mitochondrial"/>
    <property type="match status" value="1"/>
</dbReference>
<dbReference type="Gene3D" id="3.30.230.10">
    <property type="match status" value="1"/>
</dbReference>
<dbReference type="Gene3D" id="3.30.70.240">
    <property type="match status" value="1"/>
</dbReference>
<dbReference type="Gene3D" id="3.30.70.870">
    <property type="entry name" value="Elongation Factor G (Translational Gtpase), domain 3"/>
    <property type="match status" value="1"/>
</dbReference>
<dbReference type="Gene3D" id="3.40.50.300">
    <property type="entry name" value="P-loop containing nucleotide triphosphate hydrolases"/>
    <property type="match status" value="1"/>
</dbReference>
<dbReference type="Gene3D" id="2.40.30.10">
    <property type="entry name" value="Translation factors"/>
    <property type="match status" value="1"/>
</dbReference>
<dbReference type="HAMAP" id="MF_00054_B">
    <property type="entry name" value="EF_G_EF_2_B"/>
    <property type="match status" value="1"/>
</dbReference>
<dbReference type="InterPro" id="IPR041095">
    <property type="entry name" value="EFG_II"/>
</dbReference>
<dbReference type="InterPro" id="IPR009022">
    <property type="entry name" value="EFG_III"/>
</dbReference>
<dbReference type="InterPro" id="IPR035647">
    <property type="entry name" value="EFG_III/V"/>
</dbReference>
<dbReference type="InterPro" id="IPR047872">
    <property type="entry name" value="EFG_IV"/>
</dbReference>
<dbReference type="InterPro" id="IPR035649">
    <property type="entry name" value="EFG_V"/>
</dbReference>
<dbReference type="InterPro" id="IPR000640">
    <property type="entry name" value="EFG_V-like"/>
</dbReference>
<dbReference type="InterPro" id="IPR004161">
    <property type="entry name" value="EFTu-like_2"/>
</dbReference>
<dbReference type="InterPro" id="IPR031157">
    <property type="entry name" value="G_TR_CS"/>
</dbReference>
<dbReference type="InterPro" id="IPR027417">
    <property type="entry name" value="P-loop_NTPase"/>
</dbReference>
<dbReference type="InterPro" id="IPR020568">
    <property type="entry name" value="Ribosomal_Su5_D2-typ_SF"/>
</dbReference>
<dbReference type="InterPro" id="IPR014721">
    <property type="entry name" value="Ribsml_uS5_D2-typ_fold_subgr"/>
</dbReference>
<dbReference type="InterPro" id="IPR005225">
    <property type="entry name" value="Small_GTP-bd"/>
</dbReference>
<dbReference type="InterPro" id="IPR000795">
    <property type="entry name" value="T_Tr_GTP-bd_dom"/>
</dbReference>
<dbReference type="InterPro" id="IPR009000">
    <property type="entry name" value="Transl_B-barrel_sf"/>
</dbReference>
<dbReference type="InterPro" id="IPR004540">
    <property type="entry name" value="Transl_elong_EFG/EF2"/>
</dbReference>
<dbReference type="InterPro" id="IPR005517">
    <property type="entry name" value="Transl_elong_EFG/EF2_IV"/>
</dbReference>
<dbReference type="NCBIfam" id="TIGR00484">
    <property type="entry name" value="EF-G"/>
    <property type="match status" value="1"/>
</dbReference>
<dbReference type="NCBIfam" id="NF009381">
    <property type="entry name" value="PRK12740.1-5"/>
    <property type="match status" value="1"/>
</dbReference>
<dbReference type="NCBIfam" id="TIGR00231">
    <property type="entry name" value="small_GTP"/>
    <property type="match status" value="1"/>
</dbReference>
<dbReference type="PANTHER" id="PTHR43636">
    <property type="entry name" value="ELONGATION FACTOR G, MITOCHONDRIAL"/>
    <property type="match status" value="1"/>
</dbReference>
<dbReference type="PANTHER" id="PTHR43636:SF2">
    <property type="entry name" value="ELONGATION FACTOR G, MITOCHONDRIAL"/>
    <property type="match status" value="1"/>
</dbReference>
<dbReference type="Pfam" id="PF00679">
    <property type="entry name" value="EFG_C"/>
    <property type="match status" value="1"/>
</dbReference>
<dbReference type="Pfam" id="PF14492">
    <property type="entry name" value="EFG_III"/>
    <property type="match status" value="1"/>
</dbReference>
<dbReference type="Pfam" id="PF03764">
    <property type="entry name" value="EFG_IV"/>
    <property type="match status" value="1"/>
</dbReference>
<dbReference type="Pfam" id="PF00009">
    <property type="entry name" value="GTP_EFTU"/>
    <property type="match status" value="1"/>
</dbReference>
<dbReference type="Pfam" id="PF03144">
    <property type="entry name" value="GTP_EFTU_D2"/>
    <property type="match status" value="1"/>
</dbReference>
<dbReference type="PRINTS" id="PR00315">
    <property type="entry name" value="ELONGATNFCT"/>
</dbReference>
<dbReference type="SMART" id="SM00838">
    <property type="entry name" value="EFG_C"/>
    <property type="match status" value="1"/>
</dbReference>
<dbReference type="SMART" id="SM00889">
    <property type="entry name" value="EFG_IV"/>
    <property type="match status" value="1"/>
</dbReference>
<dbReference type="SUPFAM" id="SSF54980">
    <property type="entry name" value="EF-G C-terminal domain-like"/>
    <property type="match status" value="2"/>
</dbReference>
<dbReference type="SUPFAM" id="SSF52540">
    <property type="entry name" value="P-loop containing nucleoside triphosphate hydrolases"/>
    <property type="match status" value="1"/>
</dbReference>
<dbReference type="SUPFAM" id="SSF54211">
    <property type="entry name" value="Ribosomal protein S5 domain 2-like"/>
    <property type="match status" value="1"/>
</dbReference>
<dbReference type="SUPFAM" id="SSF50447">
    <property type="entry name" value="Translation proteins"/>
    <property type="match status" value="1"/>
</dbReference>
<dbReference type="PROSITE" id="PS00301">
    <property type="entry name" value="G_TR_1"/>
    <property type="match status" value="1"/>
</dbReference>
<dbReference type="PROSITE" id="PS51722">
    <property type="entry name" value="G_TR_2"/>
    <property type="match status" value="1"/>
</dbReference>
<keyword id="KW-0251">Elongation factor</keyword>
<keyword id="KW-0342">GTP-binding</keyword>
<keyword id="KW-0378">Hydrolase</keyword>
<keyword id="KW-0496">Mitochondrion</keyword>
<keyword id="KW-0547">Nucleotide-binding</keyword>
<keyword id="KW-0648">Protein biosynthesis</keyword>
<keyword id="KW-1185">Reference proteome</keyword>
<keyword id="KW-0809">Transit peptide</keyword>